<feature type="chain" id="PRO_0000327109" description="Protoheme IX farnesyltransferase">
    <location>
        <begin position="1"/>
        <end position="303"/>
    </location>
</feature>
<feature type="transmembrane region" description="Helical" evidence="1">
    <location>
        <begin position="30"/>
        <end position="50"/>
    </location>
</feature>
<feature type="transmembrane region" description="Helical" evidence="1">
    <location>
        <begin position="54"/>
        <end position="74"/>
    </location>
</feature>
<feature type="transmembrane region" description="Helical" evidence="1">
    <location>
        <begin position="101"/>
        <end position="121"/>
    </location>
</feature>
<feature type="transmembrane region" description="Helical" evidence="1">
    <location>
        <begin position="123"/>
        <end position="143"/>
    </location>
</feature>
<feature type="transmembrane region" description="Helical" evidence="1">
    <location>
        <begin position="150"/>
        <end position="170"/>
    </location>
</feature>
<feature type="transmembrane region" description="Helical" evidence="1">
    <location>
        <begin position="178"/>
        <end position="198"/>
    </location>
</feature>
<feature type="transmembrane region" description="Helical" evidence="1">
    <location>
        <begin position="219"/>
        <end position="241"/>
    </location>
</feature>
<feature type="transmembrane region" description="Helical" evidence="1">
    <location>
        <begin position="245"/>
        <end position="262"/>
    </location>
</feature>
<feature type="transmembrane region" description="Helical" evidence="1">
    <location>
        <begin position="279"/>
        <end position="299"/>
    </location>
</feature>
<reference key="1">
    <citation type="journal article" date="2005" name="Science">
        <title>Genome streamlining in a cosmopolitan oceanic bacterium.</title>
        <authorList>
            <person name="Giovannoni S.J."/>
            <person name="Tripp H.J."/>
            <person name="Givan S."/>
            <person name="Podar M."/>
            <person name="Vergin K.L."/>
            <person name="Baptista D."/>
            <person name="Bibbs L."/>
            <person name="Eads J."/>
            <person name="Richardson T.H."/>
            <person name="Noordewier M."/>
            <person name="Rappe M.S."/>
            <person name="Short J.M."/>
            <person name="Carrington J.C."/>
            <person name="Mathur E.J."/>
        </authorList>
    </citation>
    <scope>NUCLEOTIDE SEQUENCE [LARGE SCALE GENOMIC DNA]</scope>
    <source>
        <strain>HTCC1062</strain>
    </source>
</reference>
<sequence length="303" mass="34179">MINSKLKNRNLNQVNVFNFSELFKLMKPRVMSLVIFTCAVGLLMAPSTVSTKDAMIAILLVSIGAGAAGALNMWYESDLDALMTRTCLRPIPMGKVNKNQALIFGTSLSFFSVIALDYFANTISAVLLLFTILFYVFVYTIWLKRKTPQNIVIGGAAGALPPVIGWTIATNSLSLEPITFFLIIFFWTPSHFWALSLYKSDDYKKAKIPMLPLTNGIESTKINILVYSLLMLPMVILPYAIDFVGLVFLVPALMLTLYYNILCFELYKFKINKFNPKKAKTIFGYSILYLFLIFVIFLIDKIL</sequence>
<keyword id="KW-0997">Cell inner membrane</keyword>
<keyword id="KW-1003">Cell membrane</keyword>
<keyword id="KW-0350">Heme biosynthesis</keyword>
<keyword id="KW-0472">Membrane</keyword>
<keyword id="KW-1185">Reference proteome</keyword>
<keyword id="KW-0808">Transferase</keyword>
<keyword id="KW-0812">Transmembrane</keyword>
<keyword id="KW-1133">Transmembrane helix</keyword>
<comment type="function">
    <text evidence="1">Converts heme B (protoheme IX) to heme O by substitution of the vinyl group on carbon 2 of heme B porphyrin ring with a hydroxyethyl farnesyl side group.</text>
</comment>
<comment type="catalytic activity">
    <reaction evidence="1">
        <text>heme b + (2E,6E)-farnesyl diphosphate + H2O = Fe(II)-heme o + diphosphate</text>
        <dbReference type="Rhea" id="RHEA:28070"/>
        <dbReference type="ChEBI" id="CHEBI:15377"/>
        <dbReference type="ChEBI" id="CHEBI:33019"/>
        <dbReference type="ChEBI" id="CHEBI:60344"/>
        <dbReference type="ChEBI" id="CHEBI:60530"/>
        <dbReference type="ChEBI" id="CHEBI:175763"/>
        <dbReference type="EC" id="2.5.1.141"/>
    </reaction>
</comment>
<comment type="pathway">
    <text evidence="1">Porphyrin-containing compound metabolism; heme O biosynthesis; heme O from protoheme: step 1/1.</text>
</comment>
<comment type="subcellular location">
    <subcellularLocation>
        <location evidence="1">Cell inner membrane</location>
        <topology evidence="1">Multi-pass membrane protein</topology>
    </subcellularLocation>
</comment>
<comment type="miscellaneous">
    <text evidence="1">Carbon 2 of the heme B porphyrin ring is defined according to the Fischer nomenclature.</text>
</comment>
<comment type="similarity">
    <text evidence="1">Belongs to the UbiA prenyltransferase family. Protoheme IX farnesyltransferase subfamily.</text>
</comment>
<comment type="sequence caution" evidence="2">
    <conflict type="erroneous initiation">
        <sequence resource="EMBL-CDS" id="AAZ20957"/>
    </conflict>
</comment>
<organism>
    <name type="scientific">Pelagibacter ubique (strain HTCC1062)</name>
    <dbReference type="NCBI Taxonomy" id="335992"/>
    <lineage>
        <taxon>Bacteria</taxon>
        <taxon>Pseudomonadati</taxon>
        <taxon>Pseudomonadota</taxon>
        <taxon>Alphaproteobacteria</taxon>
        <taxon>Candidatus Pelagibacterales</taxon>
        <taxon>Candidatus Pelagibacteraceae</taxon>
        <taxon>Candidatus Pelagibacter</taxon>
    </lineage>
</organism>
<name>COXX_PELUB</name>
<proteinExistence type="inferred from homology"/>
<dbReference type="EC" id="2.5.1.141" evidence="1"/>
<dbReference type="EMBL" id="CP000084">
    <property type="protein sequence ID" value="AAZ20957.1"/>
    <property type="status" value="ALT_INIT"/>
    <property type="molecule type" value="Genomic_DNA"/>
</dbReference>
<dbReference type="RefSeq" id="WP_011281495.1">
    <property type="nucleotide sequence ID" value="NC_007205.1"/>
</dbReference>
<dbReference type="SMR" id="Q4FPD2"/>
<dbReference type="STRING" id="335992.SAR11_0133"/>
<dbReference type="GeneID" id="66294635"/>
<dbReference type="KEGG" id="pub:SAR11_0133"/>
<dbReference type="eggNOG" id="COG0109">
    <property type="taxonomic scope" value="Bacteria"/>
</dbReference>
<dbReference type="HOGENOM" id="CLU_029631_0_2_5"/>
<dbReference type="OrthoDB" id="9814417at2"/>
<dbReference type="UniPathway" id="UPA00834">
    <property type="reaction ID" value="UER00712"/>
</dbReference>
<dbReference type="Proteomes" id="UP000002528">
    <property type="component" value="Chromosome"/>
</dbReference>
<dbReference type="GO" id="GO:0005886">
    <property type="term" value="C:plasma membrane"/>
    <property type="evidence" value="ECO:0007669"/>
    <property type="project" value="UniProtKB-SubCell"/>
</dbReference>
<dbReference type="GO" id="GO:0008495">
    <property type="term" value="F:protoheme IX farnesyltransferase activity"/>
    <property type="evidence" value="ECO:0007669"/>
    <property type="project" value="UniProtKB-UniRule"/>
</dbReference>
<dbReference type="GO" id="GO:0048034">
    <property type="term" value="P:heme O biosynthetic process"/>
    <property type="evidence" value="ECO:0007669"/>
    <property type="project" value="UniProtKB-UniRule"/>
</dbReference>
<dbReference type="CDD" id="cd13957">
    <property type="entry name" value="PT_UbiA_Cox10"/>
    <property type="match status" value="1"/>
</dbReference>
<dbReference type="Gene3D" id="1.10.357.140">
    <property type="entry name" value="UbiA prenyltransferase"/>
    <property type="match status" value="1"/>
</dbReference>
<dbReference type="HAMAP" id="MF_00154">
    <property type="entry name" value="CyoE_CtaB"/>
    <property type="match status" value="1"/>
</dbReference>
<dbReference type="InterPro" id="IPR006369">
    <property type="entry name" value="Protohaem_IX_farnesylTrfase"/>
</dbReference>
<dbReference type="InterPro" id="IPR000537">
    <property type="entry name" value="UbiA_prenyltransferase"/>
</dbReference>
<dbReference type="InterPro" id="IPR030470">
    <property type="entry name" value="UbiA_prenylTrfase_CS"/>
</dbReference>
<dbReference type="InterPro" id="IPR044878">
    <property type="entry name" value="UbiA_sf"/>
</dbReference>
<dbReference type="NCBIfam" id="TIGR01473">
    <property type="entry name" value="cyoE_ctaB"/>
    <property type="match status" value="1"/>
</dbReference>
<dbReference type="NCBIfam" id="NF003349">
    <property type="entry name" value="PRK04375.1-2"/>
    <property type="match status" value="1"/>
</dbReference>
<dbReference type="PANTHER" id="PTHR43448:SF7">
    <property type="entry name" value="4-HYDROXYBENZOATE SOLANESYLTRANSFERASE"/>
    <property type="match status" value="1"/>
</dbReference>
<dbReference type="PANTHER" id="PTHR43448">
    <property type="entry name" value="PROTOHEME IX FARNESYLTRANSFERASE, MITOCHONDRIAL"/>
    <property type="match status" value="1"/>
</dbReference>
<dbReference type="Pfam" id="PF01040">
    <property type="entry name" value="UbiA"/>
    <property type="match status" value="1"/>
</dbReference>
<dbReference type="PROSITE" id="PS00943">
    <property type="entry name" value="UBIA"/>
    <property type="match status" value="1"/>
</dbReference>
<accession>Q4FPD2</accession>
<gene>
    <name evidence="1" type="primary">ctaB</name>
    <name type="ordered locus">SAR11_0133</name>
</gene>
<evidence type="ECO:0000255" key="1">
    <source>
        <dbReference type="HAMAP-Rule" id="MF_00154"/>
    </source>
</evidence>
<evidence type="ECO:0000305" key="2"/>
<protein>
    <recommendedName>
        <fullName evidence="1">Protoheme IX farnesyltransferase</fullName>
        <ecNumber evidence="1">2.5.1.141</ecNumber>
    </recommendedName>
    <alternativeName>
        <fullName evidence="1">Heme B farnesyltransferase</fullName>
    </alternativeName>
    <alternativeName>
        <fullName evidence="1">Heme O synthase</fullName>
    </alternativeName>
</protein>